<protein>
    <recommendedName>
        <fullName evidence="3">Metallo-beta-lactamase type 2</fullName>
        <ecNumber evidence="1">3.5.2.6</ecNumber>
    </recommendedName>
    <alternativeName>
        <fullName evidence="1">B2 metallo-beta-lactamase</fullName>
    </alternativeName>
    <alternativeName>
        <fullName evidence="1">Beta-lactamase type II</fullName>
    </alternativeName>
    <alternativeName>
        <fullName evidence="1">Carbapenem-hydrolyzing beta-lactamase BlaB-2</fullName>
        <shortName evidence="1">CHbetaL-2</shortName>
    </alternativeName>
    <alternativeName>
        <fullName evidence="1">Class B carbapenemase BlaB-2</fullName>
    </alternativeName>
    <alternativeName>
        <fullName evidence="1">Metallo-beta-lactamase type II</fullName>
    </alternativeName>
</protein>
<keyword id="KW-0046">Antibiotic resistance</keyword>
<keyword id="KW-0378">Hydrolase</keyword>
<keyword id="KW-0479">Metal-binding</keyword>
<keyword id="KW-0574">Periplasm</keyword>
<keyword id="KW-0732">Signal</keyword>
<keyword id="KW-0862">Zinc</keyword>
<organism>
    <name type="scientific">Elizabethkingia meningoseptica</name>
    <name type="common">Chryseobacterium meningosepticum</name>
    <dbReference type="NCBI Taxonomy" id="238"/>
    <lineage>
        <taxon>Bacteria</taxon>
        <taxon>Pseudomonadati</taxon>
        <taxon>Bacteroidota</taxon>
        <taxon>Flavobacteriia</taxon>
        <taxon>Flavobacteriales</taxon>
        <taxon>Weeksellaceae</taxon>
        <taxon>Elizabethkingia</taxon>
    </lineage>
</organism>
<proteinExistence type="inferred from homology"/>
<gene>
    <name type="primary">blaB2</name>
    <name evidence="1" type="synonym">blaB</name>
</gene>
<comment type="function">
    <text evidence="1">Confers resistance to the different beta-lactams antibiotics (penicillin, cephalosporin and carbapenem) via the hydrolysis of the beta-lactam ring.</text>
</comment>
<comment type="catalytic activity">
    <reaction evidence="1">
        <text>a beta-lactam + H2O = a substituted beta-amino acid</text>
        <dbReference type="Rhea" id="RHEA:20401"/>
        <dbReference type="ChEBI" id="CHEBI:15377"/>
        <dbReference type="ChEBI" id="CHEBI:35627"/>
        <dbReference type="ChEBI" id="CHEBI:140347"/>
        <dbReference type="EC" id="3.5.2.6"/>
    </reaction>
</comment>
<comment type="cofactor">
    <cofactor evidence="1">
        <name>Zn(2+)</name>
        <dbReference type="ChEBI" id="CHEBI:29105"/>
    </cofactor>
    <text evidence="1">Binds 2 Zn(2+) ions per subunit.</text>
</comment>
<comment type="subunit">
    <text evidence="1">Monomer.</text>
</comment>
<comment type="subcellular location">
    <subcellularLocation>
        <location evidence="3">Periplasm</location>
    </subcellularLocation>
</comment>
<comment type="similarity">
    <text evidence="3">Belongs to the metallo-beta-lactamase superfamily. Class-B beta-lactamase family.</text>
</comment>
<reference key="1">
    <citation type="submission" date="1999-02" db="EMBL/GenBank/DDBJ databases">
        <title>Nucleotide sequence of the beta-lactamase gene, blaB2, conferring resistance to carbapenem antibiotics in a clinical isolate of Chryseobacterium (Flavobacterium) meningosepticum.</title>
        <authorList>
            <person name="Woodford N."/>
            <person name="Babini G.S."/>
            <person name="Palepou M.-F.I."/>
            <person name="Livermore D.M."/>
        </authorList>
    </citation>
    <scope>NUCLEOTIDE SEQUENCE [GENOMIC DNA]</scope>
    <source>
        <strain>97/P/5448</strain>
    </source>
</reference>
<reference key="2">
    <citation type="journal article" date="2000" name="Antimicrob. Agents Chemother.">
        <title>Molecular and biochemical heterogeneity of class B carbapenem-hydrolyzing beta-lactamases in Chryseobacterium meningosepticum.</title>
        <authorList>
            <person name="Bellais S."/>
            <person name="Aubert D."/>
            <person name="Naas T."/>
            <person name="Nordmann P."/>
        </authorList>
    </citation>
    <scope>NUCLEOTIDE SEQUENCE [GENOMIC DNA]</scope>
    <source>
        <strain>AMA</strain>
    </source>
</reference>
<accession>Q9RB01</accession>
<feature type="signal peptide" evidence="1 2">
    <location>
        <begin position="1"/>
        <end position="22"/>
    </location>
</feature>
<feature type="chain" id="PRO_0000016950" description="Metallo-beta-lactamase type 2">
    <location>
        <begin position="23"/>
        <end position="249"/>
    </location>
</feature>
<feature type="binding site" evidence="1">
    <location>
        <position position="98"/>
    </location>
    <ligand>
        <name>Zn(2+)</name>
        <dbReference type="ChEBI" id="CHEBI:29105"/>
        <label>1</label>
    </ligand>
</feature>
<feature type="binding site" evidence="1">
    <location>
        <position position="100"/>
    </location>
    <ligand>
        <name>Zn(2+)</name>
        <dbReference type="ChEBI" id="CHEBI:29105"/>
        <label>1</label>
    </ligand>
</feature>
<feature type="binding site" evidence="1">
    <location>
        <position position="102"/>
    </location>
    <ligand>
        <name>Zn(2+)</name>
        <dbReference type="ChEBI" id="CHEBI:29105"/>
        <label>2</label>
    </ligand>
</feature>
<feature type="binding site" evidence="1">
    <location>
        <position position="161"/>
    </location>
    <ligand>
        <name>Zn(2+)</name>
        <dbReference type="ChEBI" id="CHEBI:29105"/>
        <label>1</label>
    </ligand>
</feature>
<feature type="binding site" evidence="1">
    <location>
        <position position="180"/>
    </location>
    <ligand>
        <name>Zn(2+)</name>
        <dbReference type="ChEBI" id="CHEBI:29105"/>
        <label>2</label>
    </ligand>
</feature>
<feature type="binding site" evidence="1">
    <location>
        <position position="183"/>
    </location>
    <ligand>
        <name>substrate</name>
    </ligand>
</feature>
<feature type="binding site" evidence="1">
    <location>
        <position position="222"/>
    </location>
    <ligand>
        <name>Zn(2+)</name>
        <dbReference type="ChEBI" id="CHEBI:29105"/>
        <label>2</label>
    </ligand>
</feature>
<evidence type="ECO:0000250" key="1">
    <source>
        <dbReference type="UniProtKB" id="O08498"/>
    </source>
</evidence>
<evidence type="ECO:0000255" key="2"/>
<evidence type="ECO:0000305" key="3"/>
<dbReference type="EC" id="3.5.2.6" evidence="1"/>
<dbReference type="EMBL" id="AF126542">
    <property type="protein sequence ID" value="AAD43145.1"/>
    <property type="molecule type" value="Genomic_DNA"/>
</dbReference>
<dbReference type="EMBL" id="AF189300">
    <property type="protein sequence ID" value="AAF89156.1"/>
    <property type="molecule type" value="Genomic_DNA"/>
</dbReference>
<dbReference type="RefSeq" id="WP_063857826.1">
    <property type="nucleotide sequence ID" value="NG_048697.1"/>
</dbReference>
<dbReference type="SMR" id="Q9RB01"/>
<dbReference type="CARD" id="ARO:3005533">
    <property type="molecule name" value="BlaB-2"/>
    <property type="mechanism identifier" value="ARO:0001004"/>
    <property type="mechanism name" value="antibiotic inactivation"/>
</dbReference>
<dbReference type="KEGG" id="ag:AAD43145"/>
<dbReference type="GO" id="GO:0042597">
    <property type="term" value="C:periplasmic space"/>
    <property type="evidence" value="ECO:0007669"/>
    <property type="project" value="UniProtKB-SubCell"/>
</dbReference>
<dbReference type="GO" id="GO:0008800">
    <property type="term" value="F:beta-lactamase activity"/>
    <property type="evidence" value="ECO:0007669"/>
    <property type="project" value="UniProtKB-EC"/>
</dbReference>
<dbReference type="GO" id="GO:0008270">
    <property type="term" value="F:zinc ion binding"/>
    <property type="evidence" value="ECO:0007669"/>
    <property type="project" value="InterPro"/>
</dbReference>
<dbReference type="GO" id="GO:0017001">
    <property type="term" value="P:antibiotic catabolic process"/>
    <property type="evidence" value="ECO:0007669"/>
    <property type="project" value="InterPro"/>
</dbReference>
<dbReference type="GO" id="GO:0046677">
    <property type="term" value="P:response to antibiotic"/>
    <property type="evidence" value="ECO:0007669"/>
    <property type="project" value="UniProtKB-KW"/>
</dbReference>
<dbReference type="CDD" id="cd16316">
    <property type="entry name" value="BlaB-like_MBL-B1"/>
    <property type="match status" value="1"/>
</dbReference>
<dbReference type="FunFam" id="3.60.15.10:FF:000096">
    <property type="entry name" value="Metallo-beta-lactamase type 2"/>
    <property type="match status" value="1"/>
</dbReference>
<dbReference type="Gene3D" id="3.60.15.10">
    <property type="entry name" value="Ribonuclease Z/Hydroxyacylglutathione hydrolase-like"/>
    <property type="match status" value="1"/>
</dbReference>
<dbReference type="InterPro" id="IPR001018">
    <property type="entry name" value="Beta-lactamase_class-B_CS"/>
</dbReference>
<dbReference type="InterPro" id="IPR001279">
    <property type="entry name" value="Metallo-B-lactamas"/>
</dbReference>
<dbReference type="InterPro" id="IPR050855">
    <property type="entry name" value="NDM-1-like"/>
</dbReference>
<dbReference type="InterPro" id="IPR036866">
    <property type="entry name" value="RibonucZ/Hydroxyglut_hydro"/>
</dbReference>
<dbReference type="NCBIfam" id="NF012229">
    <property type="entry name" value="bla_class_B_core"/>
    <property type="match status" value="1"/>
</dbReference>
<dbReference type="NCBIfam" id="NF033088">
    <property type="entry name" value="bla_subclass_B1"/>
    <property type="match status" value="1"/>
</dbReference>
<dbReference type="NCBIfam" id="NF033107">
    <property type="entry name" value="blaB"/>
    <property type="match status" value="1"/>
</dbReference>
<dbReference type="NCBIfam" id="NF012146">
    <property type="entry name" value="blaB-IND-MUS"/>
    <property type="match status" value="1"/>
</dbReference>
<dbReference type="PANTHER" id="PTHR42951:SF4">
    <property type="entry name" value="ACYL-COENZYME A THIOESTERASE MBLAC2"/>
    <property type="match status" value="1"/>
</dbReference>
<dbReference type="PANTHER" id="PTHR42951">
    <property type="entry name" value="METALLO-BETA-LACTAMASE DOMAIN-CONTAINING"/>
    <property type="match status" value="1"/>
</dbReference>
<dbReference type="Pfam" id="PF00753">
    <property type="entry name" value="Lactamase_B"/>
    <property type="match status" value="1"/>
</dbReference>
<dbReference type="SMART" id="SM00849">
    <property type="entry name" value="Lactamase_B"/>
    <property type="match status" value="1"/>
</dbReference>
<dbReference type="SUPFAM" id="SSF56281">
    <property type="entry name" value="Metallo-hydrolase/oxidoreductase"/>
    <property type="match status" value="1"/>
</dbReference>
<dbReference type="PROSITE" id="PS00743">
    <property type="entry name" value="BETA_LACTAMASE_B_1"/>
    <property type="match status" value="1"/>
</dbReference>
<dbReference type="PROSITE" id="PS00744">
    <property type="entry name" value="BETA_LACTAMASE_B_2"/>
    <property type="match status" value="1"/>
</dbReference>
<name>BLAB2_ELIME</name>
<sequence>MLKKIKISLILALGLTSLQAFGQENPDVKIDKLKDNLYVYTTYNTFNGTKYAANAVYLVTDKGVVVIDCPWGEDKFKSFTDEIYKKHGKKVIMNIATHSHDDRAGGLEYFGKIGAKTYSTKMTDSILAKENKPRAQYTFDNNKSFKVGKSEFQVYYPGKGHTADNVVVWFPKEKVLVGGCIIKSADSKDLGYIGEAYVNDWTQSVHNIQQKFSGAQYVVAGHDDWKDQRSIQRTLDLINEYQQKQKASN</sequence>